<protein>
    <recommendedName>
        <fullName>Uncharacterized protein At4g33100</fullName>
    </recommendedName>
</protein>
<proteinExistence type="inferred from homology"/>
<dbReference type="EMBL" id="AL035525">
    <property type="protein sequence ID" value="CAB36784.1"/>
    <property type="molecule type" value="Genomic_DNA"/>
</dbReference>
<dbReference type="EMBL" id="AL161582">
    <property type="protein sequence ID" value="CAB80027.1"/>
    <property type="molecule type" value="Genomic_DNA"/>
</dbReference>
<dbReference type="EMBL" id="CP002687">
    <property type="protein sequence ID" value="AEE86173.1"/>
    <property type="molecule type" value="Genomic_DNA"/>
</dbReference>
<dbReference type="EMBL" id="BT010619">
    <property type="protein sequence ID" value="AAQ89641.1"/>
    <property type="molecule type" value="mRNA"/>
</dbReference>
<dbReference type="EMBL" id="AK175258">
    <property type="protein sequence ID" value="BAD43021.1"/>
    <property type="molecule type" value="mRNA"/>
</dbReference>
<dbReference type="EMBL" id="AK175878">
    <property type="protein sequence ID" value="BAD43641.1"/>
    <property type="molecule type" value="mRNA"/>
</dbReference>
<dbReference type="PIR" id="T05190">
    <property type="entry name" value="T05190"/>
</dbReference>
<dbReference type="RefSeq" id="NP_195036.1">
    <property type="nucleotide sequence ID" value="NM_119464.3"/>
</dbReference>
<dbReference type="SMR" id="Q9SMZ9"/>
<dbReference type="FunCoup" id="Q9SMZ9">
    <property type="interactions" value="421"/>
</dbReference>
<dbReference type="STRING" id="3702.Q9SMZ9"/>
<dbReference type="PaxDb" id="3702-AT4G33100.1"/>
<dbReference type="ProteomicsDB" id="242902"/>
<dbReference type="EnsemblPlants" id="AT4G33100.1">
    <property type="protein sequence ID" value="AT4G33100.1"/>
    <property type="gene ID" value="AT4G33100"/>
</dbReference>
<dbReference type="GeneID" id="829447"/>
<dbReference type="Gramene" id="AT4G33100.1">
    <property type="protein sequence ID" value="AT4G33100.1"/>
    <property type="gene ID" value="AT4G33100"/>
</dbReference>
<dbReference type="KEGG" id="ath:AT4G33100"/>
<dbReference type="Araport" id="AT4G33100"/>
<dbReference type="TAIR" id="AT4G33100"/>
<dbReference type="eggNOG" id="KOG3481">
    <property type="taxonomic scope" value="Eukaryota"/>
</dbReference>
<dbReference type="HOGENOM" id="CLU_101473_3_0_1"/>
<dbReference type="InParanoid" id="Q9SMZ9"/>
<dbReference type="OMA" id="DAYHNCF"/>
<dbReference type="PhylomeDB" id="Q9SMZ9"/>
<dbReference type="PRO" id="PR:Q9SMZ9"/>
<dbReference type="Proteomes" id="UP000006548">
    <property type="component" value="Chromosome 4"/>
</dbReference>
<dbReference type="ExpressionAtlas" id="Q9SMZ9">
    <property type="expression patterns" value="baseline and differential"/>
</dbReference>
<dbReference type="InterPro" id="IPR007918">
    <property type="entry name" value="MDM35_apoptosis"/>
</dbReference>
<dbReference type="PANTHER" id="PTHR46403">
    <property type="entry name" value="TP53-REGULATED INHIBITOR OF APOPTOSIS 1"/>
    <property type="match status" value="1"/>
</dbReference>
<dbReference type="PANTHER" id="PTHR46403:SF1">
    <property type="entry name" value="TP53-REGULATED INHIBITOR OF APOPTOSIS 1"/>
    <property type="match status" value="1"/>
</dbReference>
<dbReference type="Pfam" id="PF05254">
    <property type="entry name" value="UPF0203"/>
    <property type="match status" value="1"/>
</dbReference>
<dbReference type="PROSITE" id="PS51808">
    <property type="entry name" value="CHCH"/>
    <property type="match status" value="1"/>
</dbReference>
<feature type="chain" id="PRO_0000220527" description="Uncharacterized protein At4g33100">
    <location>
        <begin position="1"/>
        <end position="92"/>
    </location>
</feature>
<feature type="domain" description="CHCH" evidence="1">
    <location>
        <begin position="16"/>
        <end position="66"/>
    </location>
</feature>
<feature type="region of interest" description="Disordered" evidence="2">
    <location>
        <begin position="1"/>
        <end position="21"/>
    </location>
</feature>
<feature type="short sequence motif" description="Cx9C motif 1" evidence="1">
    <location>
        <begin position="19"/>
        <end position="29"/>
    </location>
</feature>
<feature type="short sequence motif" description="Cx9C motif 2" evidence="1">
    <location>
        <begin position="48"/>
        <end position="58"/>
    </location>
</feature>
<feature type="compositionally biased region" description="Basic and acidic residues" evidence="2">
    <location>
        <begin position="1"/>
        <end position="10"/>
    </location>
</feature>
<feature type="disulfide bond" evidence="1">
    <location>
        <begin position="19"/>
        <end position="58"/>
    </location>
</feature>
<feature type="disulfide bond" evidence="1">
    <location>
        <begin position="29"/>
        <end position="48"/>
    </location>
</feature>
<name>Y4331_ARATH</name>
<gene>
    <name type="ordered locus">At4g33100</name>
    <name type="ORF">F4I10.30</name>
</gene>
<sequence length="92" mass="10540">MGLLKKKDSTSARSSTSPCADLRNAYHNCFNKWYSEKFVKGQWDKEECVAEWKKYRDCLSENLDGKLLTRILEVDGELNPTKQATDSKESSS</sequence>
<evidence type="ECO:0000255" key="1">
    <source>
        <dbReference type="PROSITE-ProRule" id="PRU01150"/>
    </source>
</evidence>
<evidence type="ECO:0000256" key="2">
    <source>
        <dbReference type="SAM" id="MobiDB-lite"/>
    </source>
</evidence>
<evidence type="ECO:0000305" key="3"/>
<accession>Q9SMZ9</accession>
<accession>Q680I9</accession>
<keyword id="KW-1015">Disulfide bond</keyword>
<keyword id="KW-1185">Reference proteome</keyword>
<comment type="similarity">
    <text evidence="3">Belongs to the TRIAP1/MDM35 family.</text>
</comment>
<reference key="1">
    <citation type="journal article" date="1999" name="Nature">
        <title>Sequence and analysis of chromosome 4 of the plant Arabidopsis thaliana.</title>
        <authorList>
            <person name="Mayer K.F.X."/>
            <person name="Schueller C."/>
            <person name="Wambutt R."/>
            <person name="Murphy G."/>
            <person name="Volckaert G."/>
            <person name="Pohl T."/>
            <person name="Duesterhoeft A."/>
            <person name="Stiekema W."/>
            <person name="Entian K.-D."/>
            <person name="Terryn N."/>
            <person name="Harris B."/>
            <person name="Ansorge W."/>
            <person name="Brandt P."/>
            <person name="Grivell L.A."/>
            <person name="Rieger M."/>
            <person name="Weichselgartner M."/>
            <person name="de Simone V."/>
            <person name="Obermaier B."/>
            <person name="Mache R."/>
            <person name="Mueller M."/>
            <person name="Kreis M."/>
            <person name="Delseny M."/>
            <person name="Puigdomenech P."/>
            <person name="Watson M."/>
            <person name="Schmidtheini T."/>
            <person name="Reichert B."/>
            <person name="Portetelle D."/>
            <person name="Perez-Alonso M."/>
            <person name="Boutry M."/>
            <person name="Bancroft I."/>
            <person name="Vos P."/>
            <person name="Hoheisel J."/>
            <person name="Zimmermann W."/>
            <person name="Wedler H."/>
            <person name="Ridley P."/>
            <person name="Langham S.-A."/>
            <person name="McCullagh B."/>
            <person name="Bilham L."/>
            <person name="Robben J."/>
            <person name="van der Schueren J."/>
            <person name="Grymonprez B."/>
            <person name="Chuang Y.-J."/>
            <person name="Vandenbussche F."/>
            <person name="Braeken M."/>
            <person name="Weltjens I."/>
            <person name="Voet M."/>
            <person name="Bastiaens I."/>
            <person name="Aert R."/>
            <person name="Defoor E."/>
            <person name="Weitzenegger T."/>
            <person name="Bothe G."/>
            <person name="Ramsperger U."/>
            <person name="Hilbert H."/>
            <person name="Braun M."/>
            <person name="Holzer E."/>
            <person name="Brandt A."/>
            <person name="Peters S."/>
            <person name="van Staveren M."/>
            <person name="Dirkse W."/>
            <person name="Mooijman P."/>
            <person name="Klein Lankhorst R."/>
            <person name="Rose M."/>
            <person name="Hauf J."/>
            <person name="Koetter P."/>
            <person name="Berneiser S."/>
            <person name="Hempel S."/>
            <person name="Feldpausch M."/>
            <person name="Lamberth S."/>
            <person name="Van den Daele H."/>
            <person name="De Keyser A."/>
            <person name="Buysshaert C."/>
            <person name="Gielen J."/>
            <person name="Villarroel R."/>
            <person name="De Clercq R."/>
            <person name="van Montagu M."/>
            <person name="Rogers J."/>
            <person name="Cronin A."/>
            <person name="Quail M.A."/>
            <person name="Bray-Allen S."/>
            <person name="Clark L."/>
            <person name="Doggett J."/>
            <person name="Hall S."/>
            <person name="Kay M."/>
            <person name="Lennard N."/>
            <person name="McLay K."/>
            <person name="Mayes R."/>
            <person name="Pettett A."/>
            <person name="Rajandream M.A."/>
            <person name="Lyne M."/>
            <person name="Benes V."/>
            <person name="Rechmann S."/>
            <person name="Borkova D."/>
            <person name="Bloecker H."/>
            <person name="Scharfe M."/>
            <person name="Grimm M."/>
            <person name="Loehnert T.-H."/>
            <person name="Dose S."/>
            <person name="de Haan M."/>
            <person name="Maarse A.C."/>
            <person name="Schaefer M."/>
            <person name="Mueller-Auer S."/>
            <person name="Gabel C."/>
            <person name="Fuchs M."/>
            <person name="Fartmann B."/>
            <person name="Granderath K."/>
            <person name="Dauner D."/>
            <person name="Herzl A."/>
            <person name="Neumann S."/>
            <person name="Argiriou A."/>
            <person name="Vitale D."/>
            <person name="Liguori R."/>
            <person name="Piravandi E."/>
            <person name="Massenet O."/>
            <person name="Quigley F."/>
            <person name="Clabauld G."/>
            <person name="Muendlein A."/>
            <person name="Felber R."/>
            <person name="Schnabl S."/>
            <person name="Hiller R."/>
            <person name="Schmidt W."/>
            <person name="Lecharny A."/>
            <person name="Aubourg S."/>
            <person name="Chefdor F."/>
            <person name="Cooke R."/>
            <person name="Berger C."/>
            <person name="Monfort A."/>
            <person name="Casacuberta E."/>
            <person name="Gibbons T."/>
            <person name="Weber N."/>
            <person name="Vandenbol M."/>
            <person name="Bargues M."/>
            <person name="Terol J."/>
            <person name="Torres A."/>
            <person name="Perez-Perez A."/>
            <person name="Purnelle B."/>
            <person name="Bent E."/>
            <person name="Johnson S."/>
            <person name="Tacon D."/>
            <person name="Jesse T."/>
            <person name="Heijnen L."/>
            <person name="Schwarz S."/>
            <person name="Scholler P."/>
            <person name="Heber S."/>
            <person name="Francs P."/>
            <person name="Bielke C."/>
            <person name="Frishman D."/>
            <person name="Haase D."/>
            <person name="Lemcke K."/>
            <person name="Mewes H.-W."/>
            <person name="Stocker S."/>
            <person name="Zaccaria P."/>
            <person name="Bevan M."/>
            <person name="Wilson R.K."/>
            <person name="de la Bastide M."/>
            <person name="Habermann K."/>
            <person name="Parnell L."/>
            <person name="Dedhia N."/>
            <person name="Gnoj L."/>
            <person name="Schutz K."/>
            <person name="Huang E."/>
            <person name="Spiegel L."/>
            <person name="Sekhon M."/>
            <person name="Murray J."/>
            <person name="Sheet P."/>
            <person name="Cordes M."/>
            <person name="Abu-Threideh J."/>
            <person name="Stoneking T."/>
            <person name="Kalicki J."/>
            <person name="Graves T."/>
            <person name="Harmon G."/>
            <person name="Edwards J."/>
            <person name="Latreille P."/>
            <person name="Courtney L."/>
            <person name="Cloud J."/>
            <person name="Abbott A."/>
            <person name="Scott K."/>
            <person name="Johnson D."/>
            <person name="Minx P."/>
            <person name="Bentley D."/>
            <person name="Fulton B."/>
            <person name="Miller N."/>
            <person name="Greco T."/>
            <person name="Kemp K."/>
            <person name="Kramer J."/>
            <person name="Fulton L."/>
            <person name="Mardis E."/>
            <person name="Dante M."/>
            <person name="Pepin K."/>
            <person name="Hillier L.W."/>
            <person name="Nelson J."/>
            <person name="Spieth J."/>
            <person name="Ryan E."/>
            <person name="Andrews S."/>
            <person name="Geisel C."/>
            <person name="Layman D."/>
            <person name="Du H."/>
            <person name="Ali J."/>
            <person name="Berghoff A."/>
            <person name="Jones K."/>
            <person name="Drone K."/>
            <person name="Cotton M."/>
            <person name="Joshu C."/>
            <person name="Antonoiu B."/>
            <person name="Zidanic M."/>
            <person name="Strong C."/>
            <person name="Sun H."/>
            <person name="Lamar B."/>
            <person name="Yordan C."/>
            <person name="Ma P."/>
            <person name="Zhong J."/>
            <person name="Preston R."/>
            <person name="Vil D."/>
            <person name="Shekher M."/>
            <person name="Matero A."/>
            <person name="Shah R."/>
            <person name="Swaby I.K."/>
            <person name="O'Shaughnessy A."/>
            <person name="Rodriguez M."/>
            <person name="Hoffman J."/>
            <person name="Till S."/>
            <person name="Granat S."/>
            <person name="Shohdy N."/>
            <person name="Hasegawa A."/>
            <person name="Hameed A."/>
            <person name="Lodhi M."/>
            <person name="Johnson A."/>
            <person name="Chen E."/>
            <person name="Marra M.A."/>
            <person name="Martienssen R."/>
            <person name="McCombie W.R."/>
        </authorList>
    </citation>
    <scope>NUCLEOTIDE SEQUENCE [LARGE SCALE GENOMIC DNA]</scope>
    <source>
        <strain>cv. Columbia</strain>
    </source>
</reference>
<reference key="2">
    <citation type="journal article" date="2017" name="Plant J.">
        <title>Araport11: a complete reannotation of the Arabidopsis thaliana reference genome.</title>
        <authorList>
            <person name="Cheng C.Y."/>
            <person name="Krishnakumar V."/>
            <person name="Chan A.P."/>
            <person name="Thibaud-Nissen F."/>
            <person name="Schobel S."/>
            <person name="Town C.D."/>
        </authorList>
    </citation>
    <scope>GENOME REANNOTATION</scope>
    <source>
        <strain>cv. Columbia</strain>
    </source>
</reference>
<reference key="3">
    <citation type="submission" date="2003-10" db="EMBL/GenBank/DDBJ databases">
        <title>Arabidopsis ORF clones.</title>
        <authorList>
            <person name="Cheuk R.F."/>
            <person name="Chen H."/>
            <person name="Kim C.J."/>
            <person name="Shinn P."/>
            <person name="Carninci P."/>
            <person name="Hayashizaki Y."/>
            <person name="Ishida J."/>
            <person name="Kamiya A."/>
            <person name="Kawai J."/>
            <person name="Narusaka M."/>
            <person name="Sakurai T."/>
            <person name="Satou M."/>
            <person name="Seki M."/>
            <person name="Shinozaki K."/>
            <person name="Ecker J.R."/>
        </authorList>
    </citation>
    <scope>NUCLEOTIDE SEQUENCE [LARGE SCALE MRNA]</scope>
    <source>
        <strain>cv. Columbia</strain>
    </source>
</reference>
<reference key="4">
    <citation type="submission" date="2004-09" db="EMBL/GenBank/DDBJ databases">
        <title>Large-scale analysis of RIKEN Arabidopsis full-length (RAFL) cDNAs.</title>
        <authorList>
            <person name="Totoki Y."/>
            <person name="Seki M."/>
            <person name="Ishida J."/>
            <person name="Nakajima M."/>
            <person name="Enju A."/>
            <person name="Kamiya A."/>
            <person name="Narusaka M."/>
            <person name="Shin-i T."/>
            <person name="Nakagawa M."/>
            <person name="Sakamoto N."/>
            <person name="Oishi K."/>
            <person name="Kohara Y."/>
            <person name="Kobayashi M."/>
            <person name="Toyoda A."/>
            <person name="Sakaki Y."/>
            <person name="Sakurai T."/>
            <person name="Iida K."/>
            <person name="Akiyama K."/>
            <person name="Satou M."/>
            <person name="Toyoda T."/>
            <person name="Konagaya A."/>
            <person name="Carninci P."/>
            <person name="Kawai J."/>
            <person name="Hayashizaki Y."/>
            <person name="Shinozaki K."/>
        </authorList>
    </citation>
    <scope>NUCLEOTIDE SEQUENCE [LARGE SCALE MRNA]</scope>
    <source>
        <strain>cv. Columbia</strain>
    </source>
</reference>
<organism>
    <name type="scientific">Arabidopsis thaliana</name>
    <name type="common">Mouse-ear cress</name>
    <dbReference type="NCBI Taxonomy" id="3702"/>
    <lineage>
        <taxon>Eukaryota</taxon>
        <taxon>Viridiplantae</taxon>
        <taxon>Streptophyta</taxon>
        <taxon>Embryophyta</taxon>
        <taxon>Tracheophyta</taxon>
        <taxon>Spermatophyta</taxon>
        <taxon>Magnoliopsida</taxon>
        <taxon>eudicotyledons</taxon>
        <taxon>Gunneridae</taxon>
        <taxon>Pentapetalae</taxon>
        <taxon>rosids</taxon>
        <taxon>malvids</taxon>
        <taxon>Brassicales</taxon>
        <taxon>Brassicaceae</taxon>
        <taxon>Camelineae</taxon>
        <taxon>Arabidopsis</taxon>
    </lineage>
</organism>